<proteinExistence type="inferred from homology"/>
<keyword id="KW-0488">Methylation</keyword>
<keyword id="KW-0687">Ribonucleoprotein</keyword>
<keyword id="KW-0689">Ribosomal protein</keyword>
<keyword id="KW-0694">RNA-binding</keyword>
<keyword id="KW-0699">rRNA-binding</keyword>
<keyword id="KW-0820">tRNA-binding</keyword>
<organism>
    <name type="scientific">Campylobacter jejuni subsp. doylei (strain ATCC BAA-1458 / RM4099 / 269.97)</name>
    <dbReference type="NCBI Taxonomy" id="360109"/>
    <lineage>
        <taxon>Bacteria</taxon>
        <taxon>Pseudomonadati</taxon>
        <taxon>Campylobacterota</taxon>
        <taxon>Epsilonproteobacteria</taxon>
        <taxon>Campylobacterales</taxon>
        <taxon>Campylobacteraceae</taxon>
        <taxon>Campylobacter</taxon>
    </lineage>
</organism>
<feature type="chain" id="PRO_1000049779" description="Small ribosomal subunit protein uS12">
    <location>
        <begin position="1"/>
        <end position="128"/>
    </location>
</feature>
<feature type="modified residue" description="3-methylthioaspartic acid" evidence="1">
    <location>
        <position position="89"/>
    </location>
</feature>
<protein>
    <recommendedName>
        <fullName evidence="2">Small ribosomal subunit protein uS12</fullName>
    </recommendedName>
    <alternativeName>
        <fullName evidence="3">30S ribosomal protein S12</fullName>
    </alternativeName>
</protein>
<comment type="function">
    <text evidence="2">With S4 and S5 plays an important role in translational accuracy.</text>
</comment>
<comment type="function">
    <text evidence="2">Interacts with and stabilizes bases of the 16S rRNA that are involved in tRNA selection in the A site and with the mRNA backbone. Located at the interface of the 30S and 50S subunits, it traverses the body of the 30S subunit contacting proteins on the other side and probably holding the rRNA structure together. The combined cluster of proteins S8, S12 and S17 appears to hold together the shoulder and platform of the 30S subunit.</text>
</comment>
<comment type="subunit">
    <text evidence="2">Part of the 30S ribosomal subunit. Contacts proteins S8 and S17. May interact with IF1 in the 30S initiation complex.</text>
</comment>
<comment type="similarity">
    <text evidence="2">Belongs to the universal ribosomal protein uS12 family.</text>
</comment>
<accession>A7H4P7</accession>
<gene>
    <name evidence="2" type="primary">rpsL</name>
    <name type="ordered locus">JJD26997_1444</name>
</gene>
<dbReference type="EMBL" id="CP000768">
    <property type="protein sequence ID" value="ABS44481.1"/>
    <property type="molecule type" value="Genomic_DNA"/>
</dbReference>
<dbReference type="SMR" id="A7H4P7"/>
<dbReference type="KEGG" id="cjd:JJD26997_1444"/>
<dbReference type="HOGENOM" id="CLU_104295_1_2_7"/>
<dbReference type="Proteomes" id="UP000002302">
    <property type="component" value="Chromosome"/>
</dbReference>
<dbReference type="GO" id="GO:0015935">
    <property type="term" value="C:small ribosomal subunit"/>
    <property type="evidence" value="ECO:0007669"/>
    <property type="project" value="InterPro"/>
</dbReference>
<dbReference type="GO" id="GO:0019843">
    <property type="term" value="F:rRNA binding"/>
    <property type="evidence" value="ECO:0007669"/>
    <property type="project" value="UniProtKB-UniRule"/>
</dbReference>
<dbReference type="GO" id="GO:0003735">
    <property type="term" value="F:structural constituent of ribosome"/>
    <property type="evidence" value="ECO:0007669"/>
    <property type="project" value="InterPro"/>
</dbReference>
<dbReference type="GO" id="GO:0000049">
    <property type="term" value="F:tRNA binding"/>
    <property type="evidence" value="ECO:0007669"/>
    <property type="project" value="UniProtKB-UniRule"/>
</dbReference>
<dbReference type="GO" id="GO:0006412">
    <property type="term" value="P:translation"/>
    <property type="evidence" value="ECO:0007669"/>
    <property type="project" value="UniProtKB-UniRule"/>
</dbReference>
<dbReference type="CDD" id="cd03368">
    <property type="entry name" value="Ribosomal_S12"/>
    <property type="match status" value="1"/>
</dbReference>
<dbReference type="FunFam" id="2.40.50.140:FF:000001">
    <property type="entry name" value="30S ribosomal protein S12"/>
    <property type="match status" value="1"/>
</dbReference>
<dbReference type="Gene3D" id="2.40.50.140">
    <property type="entry name" value="Nucleic acid-binding proteins"/>
    <property type="match status" value="1"/>
</dbReference>
<dbReference type="HAMAP" id="MF_00403_B">
    <property type="entry name" value="Ribosomal_uS12_B"/>
    <property type="match status" value="1"/>
</dbReference>
<dbReference type="InterPro" id="IPR012340">
    <property type="entry name" value="NA-bd_OB-fold"/>
</dbReference>
<dbReference type="InterPro" id="IPR006032">
    <property type="entry name" value="Ribosomal_uS12"/>
</dbReference>
<dbReference type="InterPro" id="IPR005679">
    <property type="entry name" value="Ribosomal_uS12_bac"/>
</dbReference>
<dbReference type="NCBIfam" id="TIGR00981">
    <property type="entry name" value="rpsL_bact"/>
    <property type="match status" value="1"/>
</dbReference>
<dbReference type="PANTHER" id="PTHR11652">
    <property type="entry name" value="30S RIBOSOMAL PROTEIN S12 FAMILY MEMBER"/>
    <property type="match status" value="1"/>
</dbReference>
<dbReference type="Pfam" id="PF00164">
    <property type="entry name" value="Ribosom_S12_S23"/>
    <property type="match status" value="1"/>
</dbReference>
<dbReference type="PIRSF" id="PIRSF002133">
    <property type="entry name" value="Ribosomal_S12/S23"/>
    <property type="match status" value="1"/>
</dbReference>
<dbReference type="PRINTS" id="PR01034">
    <property type="entry name" value="RIBOSOMALS12"/>
</dbReference>
<dbReference type="SUPFAM" id="SSF50249">
    <property type="entry name" value="Nucleic acid-binding proteins"/>
    <property type="match status" value="1"/>
</dbReference>
<dbReference type="PROSITE" id="PS00055">
    <property type="entry name" value="RIBOSOMAL_S12"/>
    <property type="match status" value="1"/>
</dbReference>
<evidence type="ECO:0000250" key="1"/>
<evidence type="ECO:0000255" key="2">
    <source>
        <dbReference type="HAMAP-Rule" id="MF_00403"/>
    </source>
</evidence>
<evidence type="ECO:0000305" key="3"/>
<sequence length="128" mass="14046">MPTINQLVRKERKKVLEKSKSPALKNCPQRRGVCTRVYTTTPKKPNSALRKVAKVRLTSGFEVISYIGGEGHNLQEHSIVLVRGGRVKDLPGVKYHIVRGALDTAGVAKRTVSRSKYGAKRPKAGAAK</sequence>
<reference key="1">
    <citation type="submission" date="2007-07" db="EMBL/GenBank/DDBJ databases">
        <title>Complete genome sequence of Campylobacter jejuni subsp doylei 269.97 isolated from human blood.</title>
        <authorList>
            <person name="Fouts D.E."/>
            <person name="Mongodin E.F."/>
            <person name="Puiu D."/>
            <person name="Sebastian Y."/>
            <person name="Miller W.G."/>
            <person name="Mandrell R.E."/>
            <person name="Lastovica A.J."/>
            <person name="Nelson K.E."/>
        </authorList>
    </citation>
    <scope>NUCLEOTIDE SEQUENCE [LARGE SCALE GENOMIC DNA]</scope>
    <source>
        <strain>ATCC BAA-1458 / RM4099 / 269.97</strain>
    </source>
</reference>
<name>RS12_CAMJD</name>